<keyword id="KW-1185">Reference proteome</keyword>
<keyword id="KW-0687">Ribonucleoprotein</keyword>
<keyword id="KW-0689">Ribosomal protein</keyword>
<keyword id="KW-0694">RNA-binding</keyword>
<keyword id="KW-0699">rRNA-binding</keyword>
<evidence type="ECO:0000255" key="1">
    <source>
        <dbReference type="HAMAP-Rule" id="MF_01334"/>
    </source>
</evidence>
<evidence type="ECO:0000305" key="2"/>
<reference key="1">
    <citation type="journal article" date="2005" name="PLoS Genet.">
        <title>Life in hot carbon monoxide: the complete genome sequence of Carboxydothermus hydrogenoformans Z-2901.</title>
        <authorList>
            <person name="Wu M."/>
            <person name="Ren Q."/>
            <person name="Durkin A.S."/>
            <person name="Daugherty S.C."/>
            <person name="Brinkac L.M."/>
            <person name="Dodson R.J."/>
            <person name="Madupu R."/>
            <person name="Sullivan S.A."/>
            <person name="Kolonay J.F."/>
            <person name="Nelson W.C."/>
            <person name="Tallon L.J."/>
            <person name="Jones K.M."/>
            <person name="Ulrich L.E."/>
            <person name="Gonzalez J.M."/>
            <person name="Zhulin I.B."/>
            <person name="Robb F.T."/>
            <person name="Eisen J.A."/>
        </authorList>
    </citation>
    <scope>NUCLEOTIDE SEQUENCE [LARGE SCALE GENOMIC DNA]</scope>
    <source>
        <strain>ATCC BAA-161 / DSM 6008 / Z-2901</strain>
    </source>
</reference>
<gene>
    <name evidence="1" type="primary">rplY</name>
    <name evidence="1" type="synonym">ctc</name>
    <name type="ordered locus">CHY_0195</name>
</gene>
<protein>
    <recommendedName>
        <fullName evidence="1">Large ribosomal subunit protein bL25</fullName>
    </recommendedName>
    <alternativeName>
        <fullName evidence="2">50S ribosomal protein L25</fullName>
    </alternativeName>
    <alternativeName>
        <fullName evidence="1">General stress protein CTC</fullName>
    </alternativeName>
</protein>
<name>RL25_CARHZ</name>
<proteinExistence type="inferred from homology"/>
<feature type="chain" id="PRO_0000244198" description="Large ribosomal subunit protein bL25">
    <location>
        <begin position="1"/>
        <end position="197"/>
    </location>
</feature>
<accession>Q3AFL7</accession>
<dbReference type="EMBL" id="CP000141">
    <property type="protein sequence ID" value="ABB13999.1"/>
    <property type="molecule type" value="Genomic_DNA"/>
</dbReference>
<dbReference type="RefSeq" id="WP_011343143.1">
    <property type="nucleotide sequence ID" value="NC_007503.1"/>
</dbReference>
<dbReference type="SMR" id="Q3AFL7"/>
<dbReference type="FunCoup" id="Q3AFL7">
    <property type="interactions" value="308"/>
</dbReference>
<dbReference type="STRING" id="246194.CHY_0195"/>
<dbReference type="KEGG" id="chy:CHY_0195"/>
<dbReference type="eggNOG" id="COG1825">
    <property type="taxonomic scope" value="Bacteria"/>
</dbReference>
<dbReference type="HOGENOM" id="CLU_075939_2_1_9"/>
<dbReference type="InParanoid" id="Q3AFL7"/>
<dbReference type="OrthoDB" id="9790002at2"/>
<dbReference type="Proteomes" id="UP000002706">
    <property type="component" value="Chromosome"/>
</dbReference>
<dbReference type="GO" id="GO:0022625">
    <property type="term" value="C:cytosolic large ribosomal subunit"/>
    <property type="evidence" value="ECO:0007669"/>
    <property type="project" value="TreeGrafter"/>
</dbReference>
<dbReference type="GO" id="GO:0008097">
    <property type="term" value="F:5S rRNA binding"/>
    <property type="evidence" value="ECO:0007669"/>
    <property type="project" value="InterPro"/>
</dbReference>
<dbReference type="GO" id="GO:0003735">
    <property type="term" value="F:structural constituent of ribosome"/>
    <property type="evidence" value="ECO:0007669"/>
    <property type="project" value="InterPro"/>
</dbReference>
<dbReference type="GO" id="GO:0006412">
    <property type="term" value="P:translation"/>
    <property type="evidence" value="ECO:0007669"/>
    <property type="project" value="UniProtKB-UniRule"/>
</dbReference>
<dbReference type="CDD" id="cd00495">
    <property type="entry name" value="Ribosomal_L25_TL5_CTC"/>
    <property type="match status" value="1"/>
</dbReference>
<dbReference type="Gene3D" id="2.170.120.20">
    <property type="entry name" value="Ribosomal protein L25, beta domain"/>
    <property type="match status" value="1"/>
</dbReference>
<dbReference type="Gene3D" id="2.40.240.10">
    <property type="entry name" value="Ribosomal Protein L25, Chain P"/>
    <property type="match status" value="1"/>
</dbReference>
<dbReference type="HAMAP" id="MF_01334">
    <property type="entry name" value="Ribosomal_bL25_CTC"/>
    <property type="match status" value="1"/>
</dbReference>
<dbReference type="InterPro" id="IPR020056">
    <property type="entry name" value="Rbsml_bL25/Gln-tRNA_synth_N"/>
</dbReference>
<dbReference type="InterPro" id="IPR011035">
    <property type="entry name" value="Ribosomal_bL25/Gln-tRNA_synth"/>
</dbReference>
<dbReference type="InterPro" id="IPR020057">
    <property type="entry name" value="Ribosomal_bL25_b-dom"/>
</dbReference>
<dbReference type="InterPro" id="IPR037121">
    <property type="entry name" value="Ribosomal_bL25_C"/>
</dbReference>
<dbReference type="InterPro" id="IPR001021">
    <property type="entry name" value="Ribosomal_bL25_long"/>
</dbReference>
<dbReference type="InterPro" id="IPR029751">
    <property type="entry name" value="Ribosomal_L25_dom"/>
</dbReference>
<dbReference type="InterPro" id="IPR020930">
    <property type="entry name" value="Ribosomal_uL5_bac-type"/>
</dbReference>
<dbReference type="NCBIfam" id="TIGR00731">
    <property type="entry name" value="bL25_bact_ctc"/>
    <property type="match status" value="1"/>
</dbReference>
<dbReference type="PANTHER" id="PTHR33284">
    <property type="entry name" value="RIBOSOMAL PROTEIN L25/GLN-TRNA SYNTHETASE, ANTI-CODON-BINDING DOMAIN-CONTAINING PROTEIN"/>
    <property type="match status" value="1"/>
</dbReference>
<dbReference type="PANTHER" id="PTHR33284:SF1">
    <property type="entry name" value="RIBOSOMAL PROTEIN L25_GLN-TRNA SYNTHETASE, ANTI-CODON-BINDING DOMAIN-CONTAINING PROTEIN"/>
    <property type="match status" value="1"/>
</dbReference>
<dbReference type="Pfam" id="PF01386">
    <property type="entry name" value="Ribosomal_L25p"/>
    <property type="match status" value="1"/>
</dbReference>
<dbReference type="Pfam" id="PF14693">
    <property type="entry name" value="Ribosomal_TL5_C"/>
    <property type="match status" value="1"/>
</dbReference>
<dbReference type="SUPFAM" id="SSF50715">
    <property type="entry name" value="Ribosomal protein L25-like"/>
    <property type="match status" value="1"/>
</dbReference>
<sequence>MEKITASVRLKKTRGERNRLLKEGKVPGVMYGKNIEPVAVAVNARELESLVERGLKLFELSVEGKTQRVLVKELQHHPVTGKLIHVDFQVVESGRKIRQLVPVELYGEPAGVKAGGILEHGLSEVTVECLPEDLPEFIEADVSKLEVGDCLRVKDLELPPGVRVIEDPESIIALISAPRDYVEEEEETTTSAPEATA</sequence>
<comment type="function">
    <text evidence="1">This is one of the proteins that binds to the 5S RNA in the ribosome where it forms part of the central protuberance.</text>
</comment>
<comment type="subunit">
    <text evidence="1">Part of the 50S ribosomal subunit; part of the 5S rRNA/L5/L18/L25 subcomplex. Contacts the 5S rRNA. Binds to the 5S rRNA independently of L5 and L18.</text>
</comment>
<comment type="similarity">
    <text evidence="1">Belongs to the bacterial ribosomal protein bL25 family. CTC subfamily.</text>
</comment>
<organism>
    <name type="scientific">Carboxydothermus hydrogenoformans (strain ATCC BAA-161 / DSM 6008 / Z-2901)</name>
    <dbReference type="NCBI Taxonomy" id="246194"/>
    <lineage>
        <taxon>Bacteria</taxon>
        <taxon>Bacillati</taxon>
        <taxon>Bacillota</taxon>
        <taxon>Clostridia</taxon>
        <taxon>Thermoanaerobacterales</taxon>
        <taxon>Thermoanaerobacteraceae</taxon>
        <taxon>Carboxydothermus</taxon>
    </lineage>
</organism>